<proteinExistence type="evidence at protein level"/>
<sequence>MAKWGEGDPRWIVEERADATNVNNWHWTERDASNWSTEKLKTLFLAVRVENEEGKCEVTEVNKLDGEASINNRKGKLIFFYEWTIKLNWTGTSKSGVQYKGHVEIPNLSDENSVDEVEISVSLAKDEPDTNLVALMKEDGVKLLREAVGIYISTLKTEFTQGMILPTVNGESVDPVGQPALKTETCKAKSAPSKSQAKPVGVKIPTCKITLKETFLTSPEELYRVFTTQELVQAFTHAPAALEADRGGKFHMVDGNVTGEFTDLVPEKHIAMKWRFKSWPEGHFATITLTFIDKNGETELCMEGRGIPAPEEERTRQGWQRYYFEGIKQTFGYGARLF</sequence>
<name>AHSA1_MOUSE</name>
<organism evidence="6">
    <name type="scientific">Mus musculus</name>
    <name type="common">Mouse</name>
    <dbReference type="NCBI Taxonomy" id="10090"/>
    <lineage>
        <taxon>Eukaryota</taxon>
        <taxon>Metazoa</taxon>
        <taxon>Chordata</taxon>
        <taxon>Craniata</taxon>
        <taxon>Vertebrata</taxon>
        <taxon>Euteleostomi</taxon>
        <taxon>Mammalia</taxon>
        <taxon>Eutheria</taxon>
        <taxon>Euarchontoglires</taxon>
        <taxon>Glires</taxon>
        <taxon>Rodentia</taxon>
        <taxon>Myomorpha</taxon>
        <taxon>Muroidea</taxon>
        <taxon>Muridae</taxon>
        <taxon>Murinae</taxon>
        <taxon>Mus</taxon>
        <taxon>Mus</taxon>
    </lineage>
</organism>
<keyword id="KW-0007">Acetylation</keyword>
<keyword id="KW-0143">Chaperone</keyword>
<keyword id="KW-0963">Cytoplasm</keyword>
<keyword id="KW-0256">Endoplasmic reticulum</keyword>
<keyword id="KW-1017">Isopeptide bond</keyword>
<keyword id="KW-0597">Phosphoprotein</keyword>
<keyword id="KW-1185">Reference proteome</keyword>
<keyword id="KW-0346">Stress response</keyword>
<keyword id="KW-0832">Ubl conjugation</keyword>
<evidence type="ECO:0000250" key="1">
    <source>
        <dbReference type="UniProtKB" id="O95433"/>
    </source>
</evidence>
<evidence type="ECO:0000269" key="2">
    <source>
    </source>
</evidence>
<evidence type="ECO:0000269" key="3">
    <source>
    </source>
</evidence>
<evidence type="ECO:0000305" key="4"/>
<evidence type="ECO:0000305" key="5">
    <source>
    </source>
</evidence>
<evidence type="ECO:0000312" key="6">
    <source>
        <dbReference type="EMBL" id="BAC36160.1"/>
    </source>
</evidence>
<dbReference type="EMBL" id="AK076069">
    <property type="protein sequence ID" value="BAC36160.1"/>
    <property type="molecule type" value="mRNA"/>
</dbReference>
<dbReference type="EMBL" id="BC023857">
    <property type="protein sequence ID" value="AAH23857.1"/>
    <property type="molecule type" value="mRNA"/>
</dbReference>
<dbReference type="EMBL" id="BC025552">
    <property type="protein sequence ID" value="AAH25552.1"/>
    <property type="molecule type" value="mRNA"/>
</dbReference>
<dbReference type="CCDS" id="CCDS26075.1"/>
<dbReference type="RefSeq" id="NP_666148.1">
    <property type="nucleotide sequence ID" value="NM_146036.2"/>
</dbReference>
<dbReference type="BMRB" id="Q8BK64"/>
<dbReference type="SMR" id="Q8BK64"/>
<dbReference type="BioGRID" id="229959">
    <property type="interactions" value="27"/>
</dbReference>
<dbReference type="FunCoup" id="Q8BK64">
    <property type="interactions" value="2970"/>
</dbReference>
<dbReference type="IntAct" id="Q8BK64">
    <property type="interactions" value="1"/>
</dbReference>
<dbReference type="STRING" id="10090.ENSMUSP00000021425"/>
<dbReference type="GlyGen" id="Q8BK64">
    <property type="glycosylation" value="1 site, 1 O-linked glycan (1 site)"/>
</dbReference>
<dbReference type="iPTMnet" id="Q8BK64"/>
<dbReference type="PhosphoSitePlus" id="Q8BK64"/>
<dbReference type="SwissPalm" id="Q8BK64"/>
<dbReference type="REPRODUCTION-2DPAGE" id="Q8BK64"/>
<dbReference type="jPOST" id="Q8BK64"/>
<dbReference type="PaxDb" id="10090-ENSMUSP00000021425"/>
<dbReference type="ProteomicsDB" id="285569"/>
<dbReference type="Pumba" id="Q8BK64"/>
<dbReference type="Antibodypedia" id="54">
    <property type="antibodies" value="834 antibodies from 36 providers"/>
</dbReference>
<dbReference type="Ensembl" id="ENSMUST00000021425.8">
    <property type="protein sequence ID" value="ENSMUSP00000021425.7"/>
    <property type="gene ID" value="ENSMUSG00000021037.8"/>
</dbReference>
<dbReference type="GeneID" id="217737"/>
<dbReference type="KEGG" id="mmu:217737"/>
<dbReference type="UCSC" id="uc007oit.1">
    <property type="organism name" value="mouse"/>
</dbReference>
<dbReference type="AGR" id="MGI:2387603"/>
<dbReference type="CTD" id="10598"/>
<dbReference type="MGI" id="MGI:2387603">
    <property type="gene designation" value="Ahsa1"/>
</dbReference>
<dbReference type="VEuPathDB" id="HostDB:ENSMUSG00000021037"/>
<dbReference type="eggNOG" id="KOG2936">
    <property type="taxonomic scope" value="Eukaryota"/>
</dbReference>
<dbReference type="GeneTree" id="ENSGT00940000155144"/>
<dbReference type="HOGENOM" id="CLU_049046_0_0_1"/>
<dbReference type="InParanoid" id="Q8BK64"/>
<dbReference type="OMA" id="HIAMKWR"/>
<dbReference type="OrthoDB" id="567237at2759"/>
<dbReference type="PhylomeDB" id="Q8BK64"/>
<dbReference type="TreeFam" id="TF313680"/>
<dbReference type="BioGRID-ORCS" id="217737">
    <property type="hits" value="8 hits in 63 CRISPR screens"/>
</dbReference>
<dbReference type="ChiTaRS" id="Ahsa1">
    <property type="organism name" value="mouse"/>
</dbReference>
<dbReference type="PRO" id="PR:Q8BK64"/>
<dbReference type="Proteomes" id="UP000000589">
    <property type="component" value="Chromosome 12"/>
</dbReference>
<dbReference type="RNAct" id="Q8BK64">
    <property type="molecule type" value="protein"/>
</dbReference>
<dbReference type="Bgee" id="ENSMUSG00000021037">
    <property type="expression patterns" value="Expressed in ear vesicle and 249 other cell types or tissues"/>
</dbReference>
<dbReference type="ExpressionAtlas" id="Q8BK64">
    <property type="expression patterns" value="baseline and differential"/>
</dbReference>
<dbReference type="GO" id="GO:0005737">
    <property type="term" value="C:cytoplasm"/>
    <property type="evidence" value="ECO:0000250"/>
    <property type="project" value="UniProtKB"/>
</dbReference>
<dbReference type="GO" id="GO:0005829">
    <property type="term" value="C:cytosol"/>
    <property type="evidence" value="ECO:0007669"/>
    <property type="project" value="UniProtKB-SubCell"/>
</dbReference>
<dbReference type="GO" id="GO:0005783">
    <property type="term" value="C:endoplasmic reticulum"/>
    <property type="evidence" value="ECO:0007669"/>
    <property type="project" value="UniProtKB-SubCell"/>
</dbReference>
<dbReference type="GO" id="GO:0001671">
    <property type="term" value="F:ATPase activator activity"/>
    <property type="evidence" value="ECO:0000250"/>
    <property type="project" value="UniProtKB"/>
</dbReference>
<dbReference type="GO" id="GO:0051879">
    <property type="term" value="F:Hsp90 protein binding"/>
    <property type="evidence" value="ECO:0000353"/>
    <property type="project" value="UniProtKB"/>
</dbReference>
<dbReference type="GO" id="GO:0044183">
    <property type="term" value="F:protein folding chaperone"/>
    <property type="evidence" value="ECO:0007669"/>
    <property type="project" value="Ensembl"/>
</dbReference>
<dbReference type="GO" id="GO:0051087">
    <property type="term" value="F:protein-folding chaperone binding"/>
    <property type="evidence" value="ECO:0000266"/>
    <property type="project" value="MGI"/>
</dbReference>
<dbReference type="GO" id="GO:0036506">
    <property type="term" value="P:maintenance of unfolded protein"/>
    <property type="evidence" value="ECO:0007669"/>
    <property type="project" value="Ensembl"/>
</dbReference>
<dbReference type="GO" id="GO:0006457">
    <property type="term" value="P:protein folding"/>
    <property type="evidence" value="ECO:0000250"/>
    <property type="project" value="UniProtKB"/>
</dbReference>
<dbReference type="CDD" id="cd08892">
    <property type="entry name" value="SRPBCC_Aha1"/>
    <property type="match status" value="1"/>
</dbReference>
<dbReference type="FunFam" id="3.15.10.20:FF:000001">
    <property type="entry name" value="Activator of 90 kDa heat shock protein ATPase 1"/>
    <property type="match status" value="1"/>
</dbReference>
<dbReference type="FunFam" id="3.30.530.20:FF:000018">
    <property type="entry name" value="Activator of 90 kDa heat shock protein ATPase 1"/>
    <property type="match status" value="1"/>
</dbReference>
<dbReference type="Gene3D" id="3.30.530.20">
    <property type="match status" value="1"/>
</dbReference>
<dbReference type="Gene3D" id="3.15.10.20">
    <property type="entry name" value="Activator of Hsp90 ATPase Aha1, N-terminal domain"/>
    <property type="match status" value="1"/>
</dbReference>
<dbReference type="InterPro" id="IPR036338">
    <property type="entry name" value="Aha1"/>
</dbReference>
<dbReference type="InterPro" id="IPR015310">
    <property type="entry name" value="AHSA1-like_N"/>
</dbReference>
<dbReference type="InterPro" id="IPR013538">
    <property type="entry name" value="ASHA1/2-like_C"/>
</dbReference>
<dbReference type="InterPro" id="IPR023393">
    <property type="entry name" value="START-like_dom_sf"/>
</dbReference>
<dbReference type="PANTHER" id="PTHR13009:SF7">
    <property type="entry name" value="ACTIVATOR OF 90 KDA HEAT SHOCK PROTEIN ATPASE HOMOLOG 1"/>
    <property type="match status" value="1"/>
</dbReference>
<dbReference type="PANTHER" id="PTHR13009">
    <property type="entry name" value="HEAT SHOCK PROTEIN 90 HSP90 CO-CHAPERONE AHA-1"/>
    <property type="match status" value="1"/>
</dbReference>
<dbReference type="Pfam" id="PF09229">
    <property type="entry name" value="Aha1_N"/>
    <property type="match status" value="1"/>
</dbReference>
<dbReference type="Pfam" id="PF08327">
    <property type="entry name" value="AHSA1"/>
    <property type="match status" value="1"/>
</dbReference>
<dbReference type="SMART" id="SM01000">
    <property type="entry name" value="Aha1_N"/>
    <property type="match status" value="1"/>
</dbReference>
<dbReference type="SUPFAM" id="SSF103111">
    <property type="entry name" value="Activator of Hsp90 ATPase, Aha1"/>
    <property type="match status" value="1"/>
</dbReference>
<dbReference type="SUPFAM" id="SSF55961">
    <property type="entry name" value="Bet v1-like"/>
    <property type="match status" value="1"/>
</dbReference>
<feature type="chain" id="PRO_0000215821" description="Activator of 90 kDa heat shock protein ATPase homolog 1">
    <location>
        <begin position="1"/>
        <end position="338"/>
    </location>
</feature>
<feature type="modified residue" description="N6-acetyllysine" evidence="1">
    <location>
        <position position="3"/>
    </location>
</feature>
<feature type="modified residue" description="Phosphoserine" evidence="1">
    <location>
        <position position="193"/>
    </location>
</feature>
<feature type="modified residue" description="N6-acetyllysine" evidence="1">
    <location>
        <position position="212"/>
    </location>
</feature>
<feature type="modified residue" description="Phosphotyrosine; by ABL" evidence="1">
    <location>
        <position position="223"/>
    </location>
</feature>
<feature type="cross-link" description="Glycyl lysine isopeptide (Lys-Gly) (interchain with G-Cter in SUMO1)" evidence="1">
    <location>
        <position position="182"/>
    </location>
</feature>
<feature type="cross-link" description="Glycyl lysine isopeptide (Lys-Gly) (interchain with G-Cter in SUMO2)" evidence="1">
    <location>
        <position position="203"/>
    </location>
</feature>
<feature type="sequence conflict" description="In Ref. 2; BAC36160." evidence="4" ref="2">
    <original>P</original>
    <variation>L</variation>
    <location>
        <position position="192"/>
    </location>
</feature>
<protein>
    <recommendedName>
        <fullName>Activator of 90 kDa heat shock protein ATPase homolog 1</fullName>
        <shortName>AHA1</shortName>
    </recommendedName>
</protein>
<accession>Q8BK64</accession>
<accession>Q8R3E6</accession>
<gene>
    <name type="primary">Ahsa1</name>
</gene>
<comment type="function">
    <text evidence="1 3">Acts as a co-chaperone of HSP90AA1 (PubMed:29127155). Activates the ATPase activity of HSP90AA1 leading to increase in its chaperone activity (PubMed:29127155). Competes with the inhibitory co-chaperone FNIP1 for binding to HSP90AA1, thereby providing a reciprocal regulatory mechanism for chaperoning of client proteins (By similarity). Competes with the inhibitory co-chaperone TSC1 for binding to HSP90AA1, thereby providing a reciprocal regulatory mechanism for chaperoning of client proteins (PubMed:29127155).</text>
</comment>
<comment type="subunit">
    <text evidence="1 2 3">Interacts with HSPCA/HSP90 (By similarity). Interacts with HSP90AA1; the interaction activates HSP90AA1 ATPase activity (PubMed:29127155). Interacts with HSP90AB1 (PubMed:22022502). Interacts with GCH1 (By similarity). Interacts with SRPK1 (By similarity). Interacts with FLCN (By similarity).</text>
</comment>
<comment type="subcellular location">
    <subcellularLocation>
        <location evidence="1">Cytoplasm</location>
        <location evidence="1">Cytosol</location>
    </subcellularLocation>
    <subcellularLocation>
        <location evidence="1">Endoplasmic reticulum</location>
    </subcellularLocation>
    <text evidence="1">May transiently interact with the endoplasmic reticulum.</text>
</comment>
<comment type="induction">
    <text>By heat shock and treatment with the HSP90 inhibitor 17-demethoxygeldanamycin (17AAG).</text>
</comment>
<comment type="PTM">
    <text evidence="5">Phosphorylation at Tyr-223 enhances binding to chaperone HSP90AA1.</text>
</comment>
<comment type="similarity">
    <text evidence="4">Belongs to the AHA1 family.</text>
</comment>
<reference key="1">
    <citation type="journal article" date="2005" name="Science">
        <title>The transcriptional landscape of the mammalian genome.</title>
        <authorList>
            <person name="Carninci P."/>
            <person name="Kasukawa T."/>
            <person name="Katayama S."/>
            <person name="Gough J."/>
            <person name="Frith M.C."/>
            <person name="Maeda N."/>
            <person name="Oyama R."/>
            <person name="Ravasi T."/>
            <person name="Lenhard B."/>
            <person name="Wells C."/>
            <person name="Kodzius R."/>
            <person name="Shimokawa K."/>
            <person name="Bajic V.B."/>
            <person name="Brenner S.E."/>
            <person name="Batalov S."/>
            <person name="Forrest A.R."/>
            <person name="Zavolan M."/>
            <person name="Davis M.J."/>
            <person name="Wilming L.G."/>
            <person name="Aidinis V."/>
            <person name="Allen J.E."/>
            <person name="Ambesi-Impiombato A."/>
            <person name="Apweiler R."/>
            <person name="Aturaliya R.N."/>
            <person name="Bailey T.L."/>
            <person name="Bansal M."/>
            <person name="Baxter L."/>
            <person name="Beisel K.W."/>
            <person name="Bersano T."/>
            <person name="Bono H."/>
            <person name="Chalk A.M."/>
            <person name="Chiu K.P."/>
            <person name="Choudhary V."/>
            <person name="Christoffels A."/>
            <person name="Clutterbuck D.R."/>
            <person name="Crowe M.L."/>
            <person name="Dalla E."/>
            <person name="Dalrymple B.P."/>
            <person name="de Bono B."/>
            <person name="Della Gatta G."/>
            <person name="di Bernardo D."/>
            <person name="Down T."/>
            <person name="Engstrom P."/>
            <person name="Fagiolini M."/>
            <person name="Faulkner G."/>
            <person name="Fletcher C.F."/>
            <person name="Fukushima T."/>
            <person name="Furuno M."/>
            <person name="Futaki S."/>
            <person name="Gariboldi M."/>
            <person name="Georgii-Hemming P."/>
            <person name="Gingeras T.R."/>
            <person name="Gojobori T."/>
            <person name="Green R.E."/>
            <person name="Gustincich S."/>
            <person name="Harbers M."/>
            <person name="Hayashi Y."/>
            <person name="Hensch T.K."/>
            <person name="Hirokawa N."/>
            <person name="Hill D."/>
            <person name="Huminiecki L."/>
            <person name="Iacono M."/>
            <person name="Ikeo K."/>
            <person name="Iwama A."/>
            <person name="Ishikawa T."/>
            <person name="Jakt M."/>
            <person name="Kanapin A."/>
            <person name="Katoh M."/>
            <person name="Kawasawa Y."/>
            <person name="Kelso J."/>
            <person name="Kitamura H."/>
            <person name="Kitano H."/>
            <person name="Kollias G."/>
            <person name="Krishnan S.P."/>
            <person name="Kruger A."/>
            <person name="Kummerfeld S.K."/>
            <person name="Kurochkin I.V."/>
            <person name="Lareau L.F."/>
            <person name="Lazarevic D."/>
            <person name="Lipovich L."/>
            <person name="Liu J."/>
            <person name="Liuni S."/>
            <person name="McWilliam S."/>
            <person name="Madan Babu M."/>
            <person name="Madera M."/>
            <person name="Marchionni L."/>
            <person name="Matsuda H."/>
            <person name="Matsuzawa S."/>
            <person name="Miki H."/>
            <person name="Mignone F."/>
            <person name="Miyake S."/>
            <person name="Morris K."/>
            <person name="Mottagui-Tabar S."/>
            <person name="Mulder N."/>
            <person name="Nakano N."/>
            <person name="Nakauchi H."/>
            <person name="Ng P."/>
            <person name="Nilsson R."/>
            <person name="Nishiguchi S."/>
            <person name="Nishikawa S."/>
            <person name="Nori F."/>
            <person name="Ohara O."/>
            <person name="Okazaki Y."/>
            <person name="Orlando V."/>
            <person name="Pang K.C."/>
            <person name="Pavan W.J."/>
            <person name="Pavesi G."/>
            <person name="Pesole G."/>
            <person name="Petrovsky N."/>
            <person name="Piazza S."/>
            <person name="Reed J."/>
            <person name="Reid J.F."/>
            <person name="Ring B.Z."/>
            <person name="Ringwald M."/>
            <person name="Rost B."/>
            <person name="Ruan Y."/>
            <person name="Salzberg S.L."/>
            <person name="Sandelin A."/>
            <person name="Schneider C."/>
            <person name="Schoenbach C."/>
            <person name="Sekiguchi K."/>
            <person name="Semple C.A."/>
            <person name="Seno S."/>
            <person name="Sessa L."/>
            <person name="Sheng Y."/>
            <person name="Shibata Y."/>
            <person name="Shimada H."/>
            <person name="Shimada K."/>
            <person name="Silva D."/>
            <person name="Sinclair B."/>
            <person name="Sperling S."/>
            <person name="Stupka E."/>
            <person name="Sugiura K."/>
            <person name="Sultana R."/>
            <person name="Takenaka Y."/>
            <person name="Taki K."/>
            <person name="Tammoja K."/>
            <person name="Tan S.L."/>
            <person name="Tang S."/>
            <person name="Taylor M.S."/>
            <person name="Tegner J."/>
            <person name="Teichmann S.A."/>
            <person name="Ueda H.R."/>
            <person name="van Nimwegen E."/>
            <person name="Verardo R."/>
            <person name="Wei C.L."/>
            <person name="Yagi K."/>
            <person name="Yamanishi H."/>
            <person name="Zabarovsky E."/>
            <person name="Zhu S."/>
            <person name="Zimmer A."/>
            <person name="Hide W."/>
            <person name="Bult C."/>
            <person name="Grimmond S.M."/>
            <person name="Teasdale R.D."/>
            <person name="Liu E.T."/>
            <person name="Brusic V."/>
            <person name="Quackenbush J."/>
            <person name="Wahlestedt C."/>
            <person name="Mattick J.S."/>
            <person name="Hume D.A."/>
            <person name="Kai C."/>
            <person name="Sasaki D."/>
            <person name="Tomaru Y."/>
            <person name="Fukuda S."/>
            <person name="Kanamori-Katayama M."/>
            <person name="Suzuki M."/>
            <person name="Aoki J."/>
            <person name="Arakawa T."/>
            <person name="Iida J."/>
            <person name="Imamura K."/>
            <person name="Itoh M."/>
            <person name="Kato T."/>
            <person name="Kawaji H."/>
            <person name="Kawagashira N."/>
            <person name="Kawashima T."/>
            <person name="Kojima M."/>
            <person name="Kondo S."/>
            <person name="Konno H."/>
            <person name="Nakano K."/>
            <person name="Ninomiya N."/>
            <person name="Nishio T."/>
            <person name="Okada M."/>
            <person name="Plessy C."/>
            <person name="Shibata K."/>
            <person name="Shiraki T."/>
            <person name="Suzuki S."/>
            <person name="Tagami M."/>
            <person name="Waki K."/>
            <person name="Watahiki A."/>
            <person name="Okamura-Oho Y."/>
            <person name="Suzuki H."/>
            <person name="Kawai J."/>
            <person name="Hayashizaki Y."/>
        </authorList>
    </citation>
    <scope>NUCLEOTIDE SEQUENCE [LARGE SCALE MRNA]</scope>
    <source>
        <strain>C57BL/6J</strain>
    </source>
</reference>
<reference evidence="4" key="2">
    <citation type="journal article" date="2004" name="Genome Res.">
        <title>The status, quality, and expansion of the NIH full-length cDNA project: the Mammalian Gene Collection (MGC).</title>
        <authorList>
            <consortium name="The MGC Project Team"/>
        </authorList>
    </citation>
    <scope>NUCLEOTIDE SEQUENCE [LARGE SCALE MRNA]</scope>
    <source>
        <strain>FVB/N</strain>
        <tissue>Mammary gland</tissue>
    </source>
</reference>
<reference key="3">
    <citation type="journal article" date="2010" name="Cell">
        <title>A tissue-specific atlas of mouse protein phosphorylation and expression.</title>
        <authorList>
            <person name="Huttlin E.L."/>
            <person name="Jedrychowski M.P."/>
            <person name="Elias J.E."/>
            <person name="Goswami T."/>
            <person name="Rad R."/>
            <person name="Beausoleil S.A."/>
            <person name="Villen J."/>
            <person name="Haas W."/>
            <person name="Sowa M.E."/>
            <person name="Gygi S.P."/>
        </authorList>
    </citation>
    <scope>IDENTIFICATION BY MASS SPECTROMETRY [LARGE SCALE ANALYSIS]</scope>
    <source>
        <tissue>Brain</tissue>
        <tissue>Brown adipose tissue</tissue>
        <tissue>Heart</tissue>
        <tissue>Kidney</tissue>
        <tissue>Liver</tissue>
        <tissue>Lung</tissue>
        <tissue>Pancreas</tissue>
        <tissue>Spleen</tissue>
        <tissue>Testis</tissue>
    </source>
</reference>
<reference key="4">
    <citation type="journal article" date="2011" name="PLoS ONE">
        <title>An interaction network predicted from public data as a discovery tool: application to the Hsp90 molecular chaperone machine.</title>
        <authorList>
            <person name="Echeverria P.C."/>
            <person name="Bernthaler A."/>
            <person name="Dupuis P."/>
            <person name="Mayer B."/>
            <person name="Picard D."/>
        </authorList>
    </citation>
    <scope>INTERACTION WITH HSP90AB1</scope>
</reference>
<reference key="5">
    <citation type="journal article" date="2017" name="EMBO J.">
        <title>Tumor suppressor Tsc1 is a new Hsp90 co-chaperone that facilitates folding of kinase and non-kinase clients.</title>
        <authorList>
            <person name="Woodford M.R."/>
            <person name="Sager R.A."/>
            <person name="Marris E."/>
            <person name="Dunn D.M."/>
            <person name="Blanden A.R."/>
            <person name="Murphy R.L."/>
            <person name="Rensing N."/>
            <person name="Shapiro O."/>
            <person name="Panaretou B."/>
            <person name="Prodromou C."/>
            <person name="Loh S.N."/>
            <person name="Gutmann D.H."/>
            <person name="Bourboulia D."/>
            <person name="Bratslavsky G."/>
            <person name="Wong M."/>
            <person name="Mollapour M."/>
        </authorList>
    </citation>
    <scope>FUNCTION</scope>
    <scope>INTERACTION WITH HSP90AA1</scope>
</reference>